<evidence type="ECO:0000256" key="1">
    <source>
        <dbReference type="SAM" id="MobiDB-lite"/>
    </source>
</evidence>
<evidence type="ECO:0000305" key="2"/>
<dbReference type="EMBL" id="CR543861">
    <property type="protein sequence ID" value="CAG67631.1"/>
    <property type="status" value="ALT_INIT"/>
    <property type="molecule type" value="Genomic_DNA"/>
</dbReference>
<dbReference type="RefSeq" id="WP_004922547.1">
    <property type="nucleotide sequence ID" value="NC_005966.1"/>
</dbReference>
<dbReference type="SMR" id="Q6FE77"/>
<dbReference type="STRING" id="202950.GCA_001485005_02481"/>
<dbReference type="GeneID" id="45233190"/>
<dbReference type="KEGG" id="aci:ACIAD0721"/>
<dbReference type="eggNOG" id="COG3422">
    <property type="taxonomic scope" value="Bacteria"/>
</dbReference>
<dbReference type="HOGENOM" id="CLU_163886_0_0_6"/>
<dbReference type="OrthoDB" id="9802792at2"/>
<dbReference type="BioCyc" id="ASP62977:ACIAD_RS03310-MONOMER"/>
<dbReference type="Proteomes" id="UP000000430">
    <property type="component" value="Chromosome"/>
</dbReference>
<dbReference type="Gene3D" id="2.30.29.80">
    <property type="match status" value="1"/>
</dbReference>
<dbReference type="InterPro" id="IPR010879">
    <property type="entry name" value="DUF1508"/>
</dbReference>
<dbReference type="InterPro" id="IPR051141">
    <property type="entry name" value="UPF0339_domain"/>
</dbReference>
<dbReference type="InterPro" id="IPR036913">
    <property type="entry name" value="YegP-like_sf"/>
</dbReference>
<dbReference type="PANTHER" id="PTHR40606">
    <property type="match status" value="1"/>
</dbReference>
<dbReference type="PANTHER" id="PTHR40606:SF1">
    <property type="entry name" value="UPF0339 PROTEIN YEGP"/>
    <property type="match status" value="1"/>
</dbReference>
<dbReference type="Pfam" id="PF07411">
    <property type="entry name" value="DUF1508"/>
    <property type="match status" value="2"/>
</dbReference>
<dbReference type="SUPFAM" id="SSF160113">
    <property type="entry name" value="YegP-like"/>
    <property type="match status" value="2"/>
</dbReference>
<organism>
    <name type="scientific">Acinetobacter baylyi (strain ATCC 33305 / BD413 / ADP1)</name>
    <dbReference type="NCBI Taxonomy" id="62977"/>
    <lineage>
        <taxon>Bacteria</taxon>
        <taxon>Pseudomonadati</taxon>
        <taxon>Pseudomonadota</taxon>
        <taxon>Gammaproteobacteria</taxon>
        <taxon>Moraxellales</taxon>
        <taxon>Moraxellaceae</taxon>
        <taxon>Acinetobacter</taxon>
    </lineage>
</organism>
<proteinExistence type="inferred from homology"/>
<reference key="1">
    <citation type="journal article" date="2004" name="Nucleic Acids Res.">
        <title>Unique features revealed by the genome sequence of Acinetobacter sp. ADP1, a versatile and naturally transformation competent bacterium.</title>
        <authorList>
            <person name="Barbe V."/>
            <person name="Vallenet D."/>
            <person name="Fonknechten N."/>
            <person name="Kreimeyer A."/>
            <person name="Oztas S."/>
            <person name="Labarre L."/>
            <person name="Cruveiller S."/>
            <person name="Robert C."/>
            <person name="Duprat S."/>
            <person name="Wincker P."/>
            <person name="Ornston L.N."/>
            <person name="Weissenbach J."/>
            <person name="Marliere P."/>
            <person name="Cohen G.N."/>
            <person name="Medigue C."/>
        </authorList>
    </citation>
    <scope>NUCLEOTIDE SEQUENCE [LARGE SCALE GENOMIC DNA]</scope>
    <source>
        <strain>ATCC 33305 / BD413 / ADP1</strain>
    </source>
</reference>
<gene>
    <name type="ordered locus">ACIAD0721</name>
</gene>
<sequence>MSGWYEISQAKDGQYRFVLKAGNGEIILTSELYKAKASAENGIASVQKNSSDDARYERLVAKNDKPYFNLKAANHQVIGTSQFYASEQSRDKGIESVKNNGTTATVKDLTG</sequence>
<feature type="chain" id="PRO_0000218128" description="UPF0339 protein ACIAD0721">
    <location>
        <begin position="1"/>
        <end position="111"/>
    </location>
</feature>
<feature type="repeat" description="1">
    <location>
        <begin position="10"/>
        <end position="58"/>
    </location>
</feature>
<feature type="repeat" description="2">
    <location>
        <begin position="61"/>
        <end position="109"/>
    </location>
</feature>
<feature type="region of interest" description="Disordered" evidence="1">
    <location>
        <begin position="89"/>
        <end position="111"/>
    </location>
</feature>
<keyword id="KW-0677">Repeat</keyword>
<protein>
    <recommendedName>
        <fullName>UPF0339 protein ACIAD0721</fullName>
    </recommendedName>
</protein>
<accession>Q6FE77</accession>
<comment type="similarity">
    <text evidence="2">Belongs to the UPF0339 family. Duplicated subfamily.</text>
</comment>
<comment type="sequence caution" evidence="2">
    <conflict type="erroneous initiation">
        <sequence resource="EMBL-CDS" id="CAG67631"/>
    </conflict>
</comment>
<name>Y721_ACIAD</name>